<accession>P06149</accession>
<accession>Q2MAU6</accession>
<evidence type="ECO:0000255" key="1">
    <source>
        <dbReference type="HAMAP-Rule" id="MF_02092"/>
    </source>
</evidence>
<evidence type="ECO:0000256" key="2">
    <source>
        <dbReference type="SAM" id="MobiDB-lite"/>
    </source>
</evidence>
<evidence type="ECO:0000269" key="3">
    <source>
    </source>
</evidence>
<evidence type="ECO:0000269" key="4">
    <source>
    </source>
</evidence>
<evidence type="ECO:0000269" key="5">
    <source>
    </source>
</evidence>
<evidence type="ECO:0000269" key="6">
    <source>
    </source>
</evidence>
<evidence type="ECO:0000269" key="7">
    <source>
    </source>
</evidence>
<evidence type="ECO:0000269" key="8">
    <source>
    </source>
</evidence>
<evidence type="ECO:0000269" key="9">
    <source>
    </source>
</evidence>
<evidence type="ECO:0000269" key="10">
    <source>
    </source>
</evidence>
<evidence type="ECO:0000303" key="11">
    <source>
    </source>
</evidence>
<evidence type="ECO:0000303" key="12">
    <source>
    </source>
</evidence>
<evidence type="ECO:0000303" key="13">
    <source>
    </source>
</evidence>
<evidence type="ECO:0000303" key="14">
    <source>
    </source>
</evidence>
<evidence type="ECO:0000305" key="15"/>
<evidence type="ECO:0000305" key="16">
    <source>
    </source>
</evidence>
<evidence type="ECO:0007744" key="17">
    <source>
        <dbReference type="PDB" id="1F0X"/>
    </source>
</evidence>
<evidence type="ECO:0007829" key="18">
    <source>
        <dbReference type="PDB" id="1F0X"/>
    </source>
</evidence>
<sequence>MSSMTTTDNKAFLNELARLVGSSHLLTDPAKTARYRKGFRSGQGDALAVVFPGSLLELWRVLKACVTADKIILMQAANTGLTEGSTPNGNDYDRDVVIISTLRLDKLHVLGKGEQVLAYPGTTLYSLEKALKPLGREPHSVIGSSCIGASVIGGICNNSGGSLVQRGPAYTEMSLFARINEDGKLTLVNHLGIDLGETPEQILSKLDDDRIKDDDVRHDGRHAHDYDYVHRVRDIEADTPARYNADPDRLFESSGCAGKLAVFAVRLDTFEAEKNQQVFYIGTNQPEVLTEIRRHILANFENLPVAGEYMHRDIYDIAEKYGKDTFLMIDKLGTDKMPFFFNLKGRTDAMLEKVKFFRPHFTDRAMQKFGHLFPSHLPPRMKNWRDKYEHHLLLKMAGDGVGEAKSWLVDYFKQAEGDFFVCTPEEGSKAFLHRFAAAGAAIRYQAVHSDEVEDILALDIALRRNDTEWYEHLPPEIDSQLVHKLYYGHFMCYVFHQDYIVKKGVDVHALKEQMLELLQQRGAQYPAEHNVGHLYKAPETLQKFYRENDPTNSMNPGIGKTSKRKNWQEVE</sequence>
<name>DLD_ECOLI</name>
<organism>
    <name type="scientific">Escherichia coli (strain K12)</name>
    <dbReference type="NCBI Taxonomy" id="83333"/>
    <lineage>
        <taxon>Bacteria</taxon>
        <taxon>Pseudomonadati</taxon>
        <taxon>Pseudomonadota</taxon>
        <taxon>Gammaproteobacteria</taxon>
        <taxon>Enterobacterales</taxon>
        <taxon>Enterobacteriaceae</taxon>
        <taxon>Escherichia</taxon>
    </lineage>
</organism>
<feature type="initiator methionine" description="Removed" evidence="7">
    <location>
        <position position="1"/>
    </location>
</feature>
<feature type="chain" id="PRO_0000079928" description="Quinone-dependent D-lactate dehydrogenase">
    <location>
        <begin position="2"/>
        <end position="571"/>
    </location>
</feature>
<feature type="domain" description="FAD-binding PCMH-type" evidence="1">
    <location>
        <begin position="42"/>
        <end position="213"/>
    </location>
</feature>
<feature type="region of interest" description="Disordered" evidence="2">
    <location>
        <begin position="546"/>
        <end position="571"/>
    </location>
</feature>
<feature type="binding site" evidence="1 4 17">
    <location>
        <begin position="76"/>
        <end position="80"/>
    </location>
    <ligand>
        <name>FAD</name>
        <dbReference type="ChEBI" id="CHEBI:57692"/>
    </ligand>
</feature>
<feature type="binding site" evidence="1 4 17">
    <location>
        <begin position="84"/>
        <end position="85"/>
    </location>
    <ligand>
        <name>FAD</name>
        <dbReference type="ChEBI" id="CHEBI:57692"/>
    </ligand>
</feature>
<feature type="binding site" evidence="1 4 17">
    <location>
        <position position="143"/>
    </location>
    <ligand>
        <name>FAD</name>
        <dbReference type="ChEBI" id="CHEBI:57692"/>
    </ligand>
</feature>
<feature type="binding site" evidence="1 4 17">
    <location>
        <position position="150"/>
    </location>
    <ligand>
        <name>FAD</name>
        <dbReference type="ChEBI" id="CHEBI:57692"/>
    </ligand>
</feature>
<feature type="binding site" evidence="1 4 17">
    <location>
        <position position="160"/>
    </location>
    <ligand>
        <name>FAD</name>
        <dbReference type="ChEBI" id="CHEBI:57692"/>
    </ligand>
</feature>
<feature type="binding site" evidence="1 4 17">
    <location>
        <position position="262"/>
    </location>
    <ligand>
        <name>FAD</name>
        <dbReference type="ChEBI" id="CHEBI:57692"/>
    </ligand>
</feature>
<feature type="helix" evidence="18">
    <location>
        <begin position="10"/>
        <end position="20"/>
    </location>
</feature>
<feature type="helix" evidence="18">
    <location>
        <begin position="22"/>
        <end position="24"/>
    </location>
</feature>
<feature type="helix" evidence="18">
    <location>
        <begin position="29"/>
        <end position="36"/>
    </location>
</feature>
<feature type="strand" evidence="18">
    <location>
        <begin position="39"/>
        <end position="41"/>
    </location>
</feature>
<feature type="strand" evidence="18">
    <location>
        <begin position="47"/>
        <end position="50"/>
    </location>
</feature>
<feature type="helix" evidence="18">
    <location>
        <begin position="55"/>
        <end position="67"/>
    </location>
</feature>
<feature type="strand" evidence="18">
    <location>
        <begin position="71"/>
        <end position="77"/>
    </location>
</feature>
<feature type="strand" evidence="18">
    <location>
        <begin position="81"/>
        <end position="83"/>
    </location>
</feature>
<feature type="strand" evidence="18">
    <location>
        <begin position="96"/>
        <end position="100"/>
    </location>
</feature>
<feature type="strand" evidence="18">
    <location>
        <begin position="107"/>
        <end position="110"/>
    </location>
</feature>
<feature type="turn" evidence="18">
    <location>
        <begin position="111"/>
        <end position="114"/>
    </location>
</feature>
<feature type="strand" evidence="18">
    <location>
        <begin position="115"/>
        <end position="118"/>
    </location>
</feature>
<feature type="helix" evidence="18">
    <location>
        <begin position="124"/>
        <end position="131"/>
    </location>
</feature>
<feature type="helix" evidence="18">
    <location>
        <begin position="132"/>
        <end position="134"/>
    </location>
</feature>
<feature type="helix" evidence="18">
    <location>
        <begin position="143"/>
        <end position="147"/>
    </location>
</feature>
<feature type="helix" evidence="18">
    <location>
        <begin position="151"/>
        <end position="156"/>
    </location>
</feature>
<feature type="strand" evidence="18">
    <location>
        <begin position="174"/>
        <end position="179"/>
    </location>
</feature>
<feature type="strand" evidence="18">
    <location>
        <begin position="185"/>
        <end position="189"/>
    </location>
</feature>
<feature type="strand" evidence="18">
    <location>
        <begin position="191"/>
        <end position="193"/>
    </location>
</feature>
<feature type="helix" evidence="18">
    <location>
        <begin position="199"/>
        <end position="207"/>
    </location>
</feature>
<feature type="helix" evidence="18">
    <location>
        <begin position="213"/>
        <end position="215"/>
    </location>
</feature>
<feature type="helix" evidence="18">
    <location>
        <begin position="228"/>
        <end position="233"/>
    </location>
</feature>
<feature type="helix" evidence="18">
    <location>
        <begin position="247"/>
        <end position="249"/>
    </location>
</feature>
<feature type="strand" evidence="18">
    <location>
        <begin position="259"/>
        <end position="268"/>
    </location>
</feature>
<feature type="strand" evidence="18">
    <location>
        <begin position="277"/>
        <end position="284"/>
    </location>
</feature>
<feature type="helix" evidence="18">
    <location>
        <begin position="286"/>
        <end position="299"/>
    </location>
</feature>
<feature type="strand" evidence="18">
    <location>
        <begin position="305"/>
        <end position="311"/>
    </location>
</feature>
<feature type="helix" evidence="18">
    <location>
        <begin position="312"/>
        <end position="318"/>
    </location>
</feature>
<feature type="helix" evidence="18">
    <location>
        <begin position="379"/>
        <end position="387"/>
    </location>
</feature>
<feature type="strand" evidence="18">
    <location>
        <begin position="389"/>
        <end position="396"/>
    </location>
</feature>
<feature type="helix" evidence="18">
    <location>
        <begin position="400"/>
        <end position="414"/>
    </location>
</feature>
<feature type="strand" evidence="18">
    <location>
        <begin position="418"/>
        <end position="421"/>
    </location>
</feature>
<feature type="helix" evidence="18">
    <location>
        <begin position="424"/>
        <end position="434"/>
    </location>
</feature>
<feature type="helix" evidence="18">
    <location>
        <begin position="437"/>
        <end position="447"/>
    </location>
</feature>
<feature type="helix" evidence="18">
    <location>
        <begin position="449"/>
        <end position="451"/>
    </location>
</feature>
<feature type="strand" evidence="18">
    <location>
        <begin position="452"/>
        <end position="461"/>
    </location>
</feature>
<feature type="helix" evidence="18">
    <location>
        <begin position="475"/>
        <end position="478"/>
    </location>
</feature>
<feature type="strand" evidence="18">
    <location>
        <begin position="481"/>
        <end position="489"/>
    </location>
</feature>
<feature type="turn" evidence="18">
    <location>
        <begin position="490"/>
        <end position="493"/>
    </location>
</feature>
<feature type="strand" evidence="18">
    <location>
        <begin position="494"/>
        <end position="502"/>
    </location>
</feature>
<feature type="helix" evidence="18">
    <location>
        <begin position="507"/>
        <end position="520"/>
    </location>
</feature>
<feature type="strand" evidence="18">
    <location>
        <begin position="527"/>
        <end position="529"/>
    </location>
</feature>
<feature type="turn" evidence="18">
    <location>
        <begin position="532"/>
        <end position="534"/>
    </location>
</feature>
<feature type="helix" evidence="18">
    <location>
        <begin position="539"/>
        <end position="548"/>
    </location>
</feature>
<feature type="turn" evidence="18">
    <location>
        <begin position="556"/>
        <end position="560"/>
    </location>
</feature>
<dbReference type="EC" id="1.1.5.12" evidence="1 6 10"/>
<dbReference type="EMBL" id="M10038">
    <property type="protein sequence ID" value="AAA23688.1"/>
    <property type="molecule type" value="Genomic_DNA"/>
</dbReference>
<dbReference type="EMBL" id="X01067">
    <property type="protein sequence ID" value="CAA25531.1"/>
    <property type="molecule type" value="Genomic_DNA"/>
</dbReference>
<dbReference type="EMBL" id="U00007">
    <property type="protein sequence ID" value="AAA60530.1"/>
    <property type="status" value="ALT_INIT"/>
    <property type="molecule type" value="Genomic_DNA"/>
</dbReference>
<dbReference type="EMBL" id="U00096">
    <property type="protein sequence ID" value="AAC75194.1"/>
    <property type="molecule type" value="Genomic_DNA"/>
</dbReference>
<dbReference type="EMBL" id="AP009048">
    <property type="protein sequence ID" value="BAE76610.1"/>
    <property type="molecule type" value="Genomic_DNA"/>
</dbReference>
<dbReference type="PIR" id="A21893">
    <property type="entry name" value="DEECDL"/>
</dbReference>
<dbReference type="RefSeq" id="NP_416637.1">
    <property type="nucleotide sequence ID" value="NC_000913.3"/>
</dbReference>
<dbReference type="RefSeq" id="WP_000097403.1">
    <property type="nucleotide sequence ID" value="NZ_LN832404.1"/>
</dbReference>
<dbReference type="PDB" id="1F0X">
    <property type="method" value="X-ray"/>
    <property type="resolution" value="1.90 A"/>
    <property type="chains" value="A/B=1-571"/>
</dbReference>
<dbReference type="PDBsum" id="1F0X"/>
<dbReference type="SMR" id="P06149"/>
<dbReference type="BioGRID" id="4260452">
    <property type="interactions" value="40"/>
</dbReference>
<dbReference type="FunCoup" id="P06149">
    <property type="interactions" value="143"/>
</dbReference>
<dbReference type="IntAct" id="P06149">
    <property type="interactions" value="17"/>
</dbReference>
<dbReference type="STRING" id="511145.b2133"/>
<dbReference type="BindingDB" id="P06149"/>
<dbReference type="DrugBank" id="DB03147">
    <property type="generic name" value="Flavin adenine dinucleotide"/>
</dbReference>
<dbReference type="DrugBank" id="DB00756">
    <property type="generic name" value="Hexachlorophene"/>
</dbReference>
<dbReference type="DrugCentral" id="P06149"/>
<dbReference type="jPOST" id="P06149"/>
<dbReference type="PaxDb" id="511145-b2133"/>
<dbReference type="EnsemblBacteria" id="AAC75194">
    <property type="protein sequence ID" value="AAC75194"/>
    <property type="gene ID" value="b2133"/>
</dbReference>
<dbReference type="GeneID" id="946653"/>
<dbReference type="KEGG" id="ecj:JW2121"/>
<dbReference type="KEGG" id="eco:b2133"/>
<dbReference type="KEGG" id="ecoc:C3026_11960"/>
<dbReference type="PATRIC" id="fig|1411691.4.peg.110"/>
<dbReference type="EchoBASE" id="EB0227"/>
<dbReference type="eggNOG" id="COG0277">
    <property type="taxonomic scope" value="Bacteria"/>
</dbReference>
<dbReference type="HOGENOM" id="CLU_034094_0_0_6"/>
<dbReference type="InParanoid" id="P06149"/>
<dbReference type="OMA" id="YEHHLML"/>
<dbReference type="OrthoDB" id="9772552at2"/>
<dbReference type="PhylomeDB" id="P06149"/>
<dbReference type="BioCyc" id="EcoCyc:DLACTDEHYDROGFAD-MONOMER"/>
<dbReference type="BioCyc" id="MetaCyc:DLACTDEHYDROGFAD-MONOMER"/>
<dbReference type="BRENDA" id="1.1.1.28">
    <property type="organism ID" value="2026"/>
</dbReference>
<dbReference type="EvolutionaryTrace" id="P06149"/>
<dbReference type="PRO" id="PR:P06149"/>
<dbReference type="Proteomes" id="UP000000625">
    <property type="component" value="Chromosome"/>
</dbReference>
<dbReference type="GO" id="GO:0009898">
    <property type="term" value="C:cytoplasmic side of plasma membrane"/>
    <property type="evidence" value="ECO:0000314"/>
    <property type="project" value="EcoCyc"/>
</dbReference>
<dbReference type="GO" id="GO:0031234">
    <property type="term" value="C:extrinsic component of cytoplasmic side of plasma membrane"/>
    <property type="evidence" value="ECO:0007669"/>
    <property type="project" value="UniProtKB-UniRule"/>
</dbReference>
<dbReference type="GO" id="GO:0005886">
    <property type="term" value="C:plasma membrane"/>
    <property type="evidence" value="ECO:0000314"/>
    <property type="project" value="EcoCyc"/>
</dbReference>
<dbReference type="GO" id="GO:0004458">
    <property type="term" value="F:D-lactate dehydrogenase (cytochrome) activity"/>
    <property type="evidence" value="ECO:0007669"/>
    <property type="project" value="UniProtKB-UniRule"/>
</dbReference>
<dbReference type="GO" id="GO:0102029">
    <property type="term" value="F:D-lactate dehydrogenase (quinone) activity"/>
    <property type="evidence" value="ECO:0007669"/>
    <property type="project" value="UniProtKB-EC"/>
</dbReference>
<dbReference type="GO" id="GO:0009055">
    <property type="term" value="F:electron transfer activity"/>
    <property type="evidence" value="ECO:0000314"/>
    <property type="project" value="EcoCyc"/>
</dbReference>
<dbReference type="GO" id="GO:0071949">
    <property type="term" value="F:FAD binding"/>
    <property type="evidence" value="ECO:0007669"/>
    <property type="project" value="InterPro"/>
</dbReference>
<dbReference type="GO" id="GO:0050660">
    <property type="term" value="F:flavin adenine dinucleotide binding"/>
    <property type="evidence" value="ECO:0000314"/>
    <property type="project" value="EcoCyc"/>
</dbReference>
<dbReference type="GO" id="GO:0016901">
    <property type="term" value="F:oxidoreductase activity, acting on the CH-OH group of donors, quinone or similar compound as acceptor"/>
    <property type="evidence" value="ECO:0000314"/>
    <property type="project" value="EcoCyc"/>
</dbReference>
<dbReference type="GO" id="GO:0048038">
    <property type="term" value="F:quinone binding"/>
    <property type="evidence" value="ECO:0007669"/>
    <property type="project" value="UniProtKB-KW"/>
</dbReference>
<dbReference type="GO" id="GO:0009060">
    <property type="term" value="P:aerobic respiration"/>
    <property type="evidence" value="ECO:0000314"/>
    <property type="project" value="EcoCyc"/>
</dbReference>
<dbReference type="GO" id="GO:0009061">
    <property type="term" value="P:anaerobic respiration"/>
    <property type="evidence" value="ECO:0000314"/>
    <property type="project" value="EcoCyc"/>
</dbReference>
<dbReference type="GO" id="GO:0006089">
    <property type="term" value="P:lactate metabolic process"/>
    <property type="evidence" value="ECO:0007669"/>
    <property type="project" value="UniProtKB-UniRule"/>
</dbReference>
<dbReference type="GO" id="GO:0022904">
    <property type="term" value="P:respiratory electron transport chain"/>
    <property type="evidence" value="ECO:0000314"/>
    <property type="project" value="EcoCyc"/>
</dbReference>
<dbReference type="GO" id="GO:0055085">
    <property type="term" value="P:transmembrane transport"/>
    <property type="evidence" value="ECO:0007669"/>
    <property type="project" value="InterPro"/>
</dbReference>
<dbReference type="FunFam" id="3.30.1370.20:FF:000001">
    <property type="entry name" value="Quinone-dependent D-lactate dehydrogenase"/>
    <property type="match status" value="1"/>
</dbReference>
<dbReference type="FunFam" id="3.30.43.10:FF:000005">
    <property type="entry name" value="Quinone-dependent D-lactate dehydrogenase"/>
    <property type="match status" value="1"/>
</dbReference>
<dbReference type="FunFam" id="3.30.465.10:FF:000015">
    <property type="entry name" value="Quinone-dependent D-lactate dehydrogenase"/>
    <property type="match status" value="1"/>
</dbReference>
<dbReference type="FunFam" id="3.30.70.610:FF:000001">
    <property type="entry name" value="Quinone-dependent D-lactate dehydrogenase"/>
    <property type="match status" value="1"/>
</dbReference>
<dbReference type="FunFam" id="3.30.70.610:FF:000002">
    <property type="entry name" value="Quinone-dependent D-lactate dehydrogenase"/>
    <property type="match status" value="1"/>
</dbReference>
<dbReference type="Gene3D" id="3.30.465.10">
    <property type="match status" value="1"/>
</dbReference>
<dbReference type="Gene3D" id="3.30.70.610">
    <property type="entry name" value="D-lactate dehydrogenase, cap domain, subdomain 1"/>
    <property type="match status" value="2"/>
</dbReference>
<dbReference type="Gene3D" id="3.30.1370.20">
    <property type="entry name" value="D-lactate dehydrogenase, cap domain, subdomain 2"/>
    <property type="match status" value="1"/>
</dbReference>
<dbReference type="Gene3D" id="3.30.43.10">
    <property type="entry name" value="Uridine Diphospho-n-acetylenolpyruvylglucosamine Reductase, domain 2"/>
    <property type="match status" value="1"/>
</dbReference>
<dbReference type="HAMAP" id="MF_02092">
    <property type="entry name" value="DLDH_Dld"/>
    <property type="match status" value="1"/>
</dbReference>
<dbReference type="InterPro" id="IPR016172">
    <property type="entry name" value="D-lactate_DH_C-sub1"/>
</dbReference>
<dbReference type="InterPro" id="IPR016173">
    <property type="entry name" value="D-lactate_DH_C-sub2"/>
</dbReference>
<dbReference type="InterPro" id="IPR012256">
    <property type="entry name" value="D_lactate_DH"/>
</dbReference>
<dbReference type="InterPro" id="IPR016166">
    <property type="entry name" value="FAD-bd_PCMH"/>
</dbReference>
<dbReference type="InterPro" id="IPR036318">
    <property type="entry name" value="FAD-bd_PCMH-like_sf"/>
</dbReference>
<dbReference type="InterPro" id="IPR016167">
    <property type="entry name" value="FAD-bd_PCMH_sub1"/>
</dbReference>
<dbReference type="InterPro" id="IPR016169">
    <property type="entry name" value="FAD-bd_PCMH_sub2"/>
</dbReference>
<dbReference type="InterPro" id="IPR016164">
    <property type="entry name" value="FAD-linked_Oxase-like_C"/>
</dbReference>
<dbReference type="InterPro" id="IPR051264">
    <property type="entry name" value="FAD-oxidored/transferase_4"/>
</dbReference>
<dbReference type="InterPro" id="IPR015409">
    <property type="entry name" value="Lactate_DH_C"/>
</dbReference>
<dbReference type="InterPro" id="IPR006094">
    <property type="entry name" value="Oxid_FAD_bind_N"/>
</dbReference>
<dbReference type="NCBIfam" id="NF008387">
    <property type="entry name" value="PRK11183.1"/>
    <property type="match status" value="1"/>
</dbReference>
<dbReference type="PANTHER" id="PTHR43716">
    <property type="entry name" value="D-2-HYDROXYGLUTARATE DEHYDROGENASE, MITOCHONDRIAL"/>
    <property type="match status" value="1"/>
</dbReference>
<dbReference type="PANTHER" id="PTHR43716:SF1">
    <property type="entry name" value="D-2-HYDROXYGLUTARATE DEHYDROGENASE, MITOCHONDRIAL"/>
    <property type="match status" value="1"/>
</dbReference>
<dbReference type="Pfam" id="PF01565">
    <property type="entry name" value="FAD_binding_4"/>
    <property type="match status" value="1"/>
</dbReference>
<dbReference type="Pfam" id="PF09330">
    <property type="entry name" value="Lact-deh-memb"/>
    <property type="match status" value="1"/>
</dbReference>
<dbReference type="PIRSF" id="PIRSF000101">
    <property type="entry name" value="D-lactate_dh"/>
    <property type="match status" value="1"/>
</dbReference>
<dbReference type="SUPFAM" id="SSF56176">
    <property type="entry name" value="FAD-binding/transporter-associated domain-like"/>
    <property type="match status" value="1"/>
</dbReference>
<dbReference type="SUPFAM" id="SSF55103">
    <property type="entry name" value="FAD-linked oxidases, C-terminal domain"/>
    <property type="match status" value="1"/>
</dbReference>
<dbReference type="PROSITE" id="PS51387">
    <property type="entry name" value="FAD_PCMH"/>
    <property type="match status" value="1"/>
</dbReference>
<protein>
    <recommendedName>
        <fullName evidence="1 15">Quinone-dependent D-lactate dehydrogenase</fullName>
        <ecNumber evidence="1 6 10">1.1.5.12</ecNumber>
    </recommendedName>
    <alternativeName>
        <fullName evidence="15">(R)-lactate:quinone 2-oxidoreductase</fullName>
    </alternativeName>
    <alternativeName>
        <fullName evidence="1 12 13">D-lactate dehydrogenase</fullName>
        <shortName evidence="1 11">D-LDH</shortName>
    </alternativeName>
    <alternativeName>
        <fullName evidence="15">Respiratory D-lactate dehydrogenase</fullName>
    </alternativeName>
</protein>
<proteinExistence type="evidence at protein level"/>
<comment type="function">
    <text evidence="5 6 8 9 10">Catalyzes the oxidation of D-lactate to pyruvate. Electrons derived from D-lactate oxidation are transferred to the ubiquinone/cytochrome electron transfer chain, where they may be used to provide energy for the active transport of a variety of amino acids and sugars across the membrane.</text>
</comment>
<comment type="catalytic activity">
    <reaction evidence="1 6 10">
        <text>(R)-lactate + a quinone = a quinol + pyruvate</text>
        <dbReference type="Rhea" id="RHEA:51468"/>
        <dbReference type="ChEBI" id="CHEBI:15361"/>
        <dbReference type="ChEBI" id="CHEBI:16004"/>
        <dbReference type="ChEBI" id="CHEBI:24646"/>
        <dbReference type="ChEBI" id="CHEBI:132124"/>
        <dbReference type="EC" id="1.1.5.12"/>
    </reaction>
</comment>
<comment type="cofactor">
    <cofactor evidence="1 4 8 9 10">
        <name>FAD</name>
        <dbReference type="ChEBI" id="CHEBI:57692"/>
    </cofactor>
</comment>
<comment type="activity regulation">
    <text evidence="9">Inhibited by 2-hydroxy-3-butynoic acid, but not by p-chloromercuribenzoate, n-ethylmaleimide, or 5,5'-dithiobis(2-nitrobenzoic acid).</text>
</comment>
<comment type="biophysicochemical properties">
    <kinetics>
        <KM evidence="5">0.16 mM for D-lactate</KM>
    </kinetics>
</comment>
<comment type="subcellular location">
    <subcellularLocation>
        <location evidence="1 3 8 9">Cell inner membrane</location>
        <topology evidence="1 3">Peripheral membrane protein</topology>
        <orientation evidence="1 3">Cytoplasmic side</orientation>
    </subcellularLocation>
    <text evidence="16">May bind the membrane through electrostatic rather than hydrophobic forces.</text>
</comment>
<comment type="domain">
    <text evidence="4">Contains 3 domains: the flavin adenine dinucleotide (FAD)-binding domain, the cap domain and the membrane-binding domain.</text>
</comment>
<comment type="similarity">
    <text evidence="1 15">Belongs to the quinone-dependent D-lactate dehydrogenase family.</text>
</comment>
<comment type="sequence caution" evidence="15">
    <conflict type="erroneous initiation">
        <sequence resource="EMBL-CDS" id="AAA60530"/>
    </conflict>
    <text>Truncated N-terminus.</text>
</comment>
<keyword id="KW-0002">3D-structure</keyword>
<keyword id="KW-0997">Cell inner membrane</keyword>
<keyword id="KW-1003">Cell membrane</keyword>
<keyword id="KW-0903">Direct protein sequencing</keyword>
<keyword id="KW-0274">FAD</keyword>
<keyword id="KW-0285">Flavoprotein</keyword>
<keyword id="KW-0472">Membrane</keyword>
<keyword id="KW-0560">Oxidoreductase</keyword>
<keyword id="KW-0874">Quinone</keyword>
<keyword id="KW-1185">Reference proteome</keyword>
<reference key="1">
    <citation type="journal article" date="1984" name="Eur. J. Biochem.">
        <title>Nucleotide sequence of the respiratory D-lactate dehydrogenase gene of Escherichia coli.</title>
        <authorList>
            <person name="Campbell H.D."/>
            <person name="Rogers B.L."/>
            <person name="Young I.G."/>
        </authorList>
    </citation>
    <scope>NUCLEOTIDE SEQUENCE [GENOMIC DNA]</scope>
    <source>
        <strain>K12</strain>
    </source>
</reference>
<reference key="2">
    <citation type="journal article" date="1985" name="J. Bacteriol.">
        <title>Overproduction and nucleotide sequence of the respiratory D-lactate dehydrogenase of Escherichia coli.</title>
        <authorList>
            <person name="Rule G.S."/>
            <person name="Pratt E.A."/>
            <person name="Chin C.C.Q."/>
            <person name="Wold F."/>
            <person name="Ho C."/>
        </authorList>
    </citation>
    <scope>NUCLEOTIDE SEQUENCE [GENOMIC DNA]</scope>
    <scope>PROTEIN SEQUENCE OF 2-18</scope>
</reference>
<reference key="3">
    <citation type="submission" date="1993-10" db="EMBL/GenBank/DDBJ databases">
        <title>Automated multiplex sequencing of the E.coli genome.</title>
        <authorList>
            <person name="Richterich P."/>
            <person name="Lakey N."/>
            <person name="Gryan G."/>
            <person name="Jaehn L."/>
            <person name="Mintz L."/>
            <person name="Robison K."/>
            <person name="Church G.M."/>
        </authorList>
    </citation>
    <scope>NUCLEOTIDE SEQUENCE [LARGE SCALE GENOMIC DNA]</scope>
    <source>
        <strain>K12 / BHB2600</strain>
    </source>
</reference>
<reference key="4">
    <citation type="journal article" date="1997" name="Science">
        <title>The complete genome sequence of Escherichia coli K-12.</title>
        <authorList>
            <person name="Blattner F.R."/>
            <person name="Plunkett G. III"/>
            <person name="Bloch C.A."/>
            <person name="Perna N.T."/>
            <person name="Burland V."/>
            <person name="Riley M."/>
            <person name="Collado-Vides J."/>
            <person name="Glasner J.D."/>
            <person name="Rode C.K."/>
            <person name="Mayhew G.F."/>
            <person name="Gregor J."/>
            <person name="Davis N.W."/>
            <person name="Kirkpatrick H.A."/>
            <person name="Goeden M.A."/>
            <person name="Rose D.J."/>
            <person name="Mau B."/>
            <person name="Shao Y."/>
        </authorList>
    </citation>
    <scope>NUCLEOTIDE SEQUENCE [LARGE SCALE GENOMIC DNA]</scope>
    <source>
        <strain>K12 / MG1655 / ATCC 47076</strain>
    </source>
</reference>
<reference key="5">
    <citation type="journal article" date="2006" name="Mol. Syst. Biol.">
        <title>Highly accurate genome sequences of Escherichia coli K-12 strains MG1655 and W3110.</title>
        <authorList>
            <person name="Hayashi K."/>
            <person name="Morooka N."/>
            <person name="Yamamoto Y."/>
            <person name="Fujita K."/>
            <person name="Isono K."/>
            <person name="Choi S."/>
            <person name="Ohtsubo E."/>
            <person name="Baba T."/>
            <person name="Wanner B.L."/>
            <person name="Mori H."/>
            <person name="Horiuchi T."/>
        </authorList>
    </citation>
    <scope>NUCLEOTIDE SEQUENCE [LARGE SCALE GENOMIC DNA]</scope>
    <source>
        <strain>K12 / W3110 / ATCC 27325 / DSM 5911</strain>
    </source>
</reference>
<reference key="6">
    <citation type="journal article" date="1997" name="Electrophoresis">
        <title>Escherichia coli proteome analysis using the gene-protein database.</title>
        <authorList>
            <person name="VanBogelen R.A."/>
            <person name="Abshire K.Z."/>
            <person name="Moldover B."/>
            <person name="Olson E.R."/>
            <person name="Neidhardt F.C."/>
        </authorList>
    </citation>
    <scope>IDENTIFICATION BY 2D-GEL</scope>
</reference>
<reference key="7">
    <citation type="journal article" date="1973" name="Biochemistry">
        <title>Membrane D-lactate dehydrogenase from Escherichia coli. Purification and properties.</title>
        <authorList>
            <person name="Futai M."/>
        </authorList>
    </citation>
    <scope>FUNCTION</scope>
    <scope>COFACTOR</scope>
    <scope>SUBCELLULAR LOCATION</scope>
</reference>
<reference key="8">
    <citation type="journal article" date="1973" name="J. Biol. Chem.">
        <title>Mechanisms of active transport in isolated bacterial membrane vesicles. XV. Purification and properties of the membrane-bound D-lactate dehydrogenase from Escherichia coli.</title>
        <authorList>
            <person name="Kohn L.D."/>
            <person name="Kaback H.R."/>
        </authorList>
    </citation>
    <scope>FUNCTION</scope>
    <scope>COFACTOR</scope>
    <scope>ACTIVITY REGULATION</scope>
    <scope>SUBCELLULAR LOCATION</scope>
    <source>
        <strain>ML 308-225</strain>
    </source>
</reference>
<reference key="9">
    <citation type="journal article" date="1975" name="J. Biol. Chem.">
        <title>Localization of D-lactate dehydrogenase in native and reconstituted Escherichia coli membrane vesicles.</title>
        <authorList>
            <person name="Short S.A."/>
            <person name="Kaback H.R."/>
            <person name="Kohn L.D."/>
        </authorList>
    </citation>
    <scope>SUBCELLULAR LOCATION</scope>
    <source>
        <strain>ML 308-225</strain>
    </source>
</reference>
<reference key="10">
    <citation type="journal article" date="1986" name="Biochemistry">
        <title>D-lactate oxidation and generation of the proton electrochemical gradient in membrane vesicles from Escherichia coli GR19N and in proteoliposomes reconstituted with purified D-lactate dehydrogenase and cytochrome o oxidase.</title>
        <authorList>
            <person name="Matsushita K."/>
            <person name="Kaback H.R."/>
        </authorList>
    </citation>
    <scope>FUNCTION</scope>
    <scope>CATALYTIC ACTIVITY</scope>
</reference>
<reference key="11">
    <citation type="journal article" date="1990" name="Biochemistry">
        <title>Site-specific incorporation of 5-fluorotryptophan as a probe of the structure and function of the membrane-bound D-lactate dehydrogenase of Escherichia coli: a 19F nuclear magnetic resonance study.</title>
        <authorList>
            <person name="Peersen O.B."/>
            <person name="Pratt E.A."/>
            <person name="Truong H.T."/>
            <person name="Ho C."/>
            <person name="Rule G.S."/>
        </authorList>
    </citation>
    <scope>FUNCTION</scope>
    <scope>BIOPHYSICOCHEMICAL PROPERTIES</scope>
</reference>
<reference key="12">
    <citation type="journal article" date="1995" name="Biochim. Biophys. Acta">
        <title>Stopped-flow kinetic and biophysical studies of membrane-associated D-lactate dehydrogenase of Escherichia coli.</title>
        <authorList>
            <person name="Sun Z.Y."/>
            <person name="Dowd S.R."/>
            <person name="Felix C."/>
            <person name="Hyde J.S."/>
            <person name="Ho C."/>
        </authorList>
    </citation>
    <scope>FUNCTION</scope>
    <scope>CATALYTIC ACTIVITY</scope>
    <scope>COFACTOR</scope>
</reference>
<reference key="13">
    <citation type="journal article" date="2000" name="Proc. Natl. Acad. Sci. U.S.A.">
        <title>The crystal structure of D-lactate dehydrogenase, a peripheral membrane respiratory enzyme.</title>
        <authorList>
            <person name="Dym O."/>
            <person name="Pratt E.A."/>
            <person name="Ho C."/>
            <person name="Eisenberg D."/>
        </authorList>
    </citation>
    <scope>X-RAY CRYSTALLOGRAPHY (1.9 ANGSTROMS) OF MUTANT TRP-368 IN COMPLEX WITH FAD</scope>
    <scope>COFACTOR</scope>
    <scope>SUBCELLULAR LOCATION</scope>
    <scope>DOMAIN</scope>
</reference>
<gene>
    <name evidence="1 14" type="primary">dld</name>
    <name type="ordered locus">b2133</name>
    <name type="ordered locus">JW2121</name>
</gene>